<gene>
    <name evidence="1" type="primary">guaA</name>
    <name type="ordered locus">EcSMS35_2656</name>
</gene>
<protein>
    <recommendedName>
        <fullName evidence="1">GMP synthase [glutamine-hydrolyzing]</fullName>
        <ecNumber evidence="1">6.3.5.2</ecNumber>
    </recommendedName>
    <alternativeName>
        <fullName evidence="1">GMP synthetase</fullName>
    </alternativeName>
    <alternativeName>
        <fullName evidence="1">Glutamine amidotransferase</fullName>
    </alternativeName>
</protein>
<organism>
    <name type="scientific">Escherichia coli (strain SMS-3-5 / SECEC)</name>
    <dbReference type="NCBI Taxonomy" id="439855"/>
    <lineage>
        <taxon>Bacteria</taxon>
        <taxon>Pseudomonadati</taxon>
        <taxon>Pseudomonadota</taxon>
        <taxon>Gammaproteobacteria</taxon>
        <taxon>Enterobacterales</taxon>
        <taxon>Enterobacteriaceae</taxon>
        <taxon>Escherichia</taxon>
    </lineage>
</organism>
<name>GUAA_ECOSM</name>
<sequence>MTENIHKHRILILDFGSQYTQLVARRVRELGVYCELWAWDVTEAQIRDFNPSGIILSGGPESTTEENSPRAPQYVFEAGVPVFGVCYGMQTMAMQLGGHVEASNEREFGYAQVEVVNDSALVRGIEDALTADGKPLLDVWMSHGDKVTAIPSDFVTVASTESCPFAIMANEEKRFYGVQFHPEVTHTRQGMRMLERFVRDICQCEALWTPAKIIDDAVARIREQVGDDKVILGLSGGVDSSVTAMLLHRAIGKNLTCVFVDNGLLRLNEAEQVLDMFGDHFGLNIVHVPAEDRFLSALAGENDPEAKRKIIGRVFVEVFDEEALKLEDVKWLAQGTIYPDVIESAASATGKAHVIKSHHNVGGLPKEMKMGLVEPLKELFKDEVRKIGLELGLPYDMLYRHPFPGPGLGVRVLGEVKKEYCDLLRRADAIFIEELRKADLYDKVSQAFTVFLPVRSVGVMGDGRKYDWVVSLRAVETIDFMTAHWAHLPYDFLGRVSNRIINEVNGISRVVYDISGKPPATIEWE</sequence>
<proteinExistence type="inferred from homology"/>
<comment type="function">
    <text evidence="1">Catalyzes the synthesis of GMP from XMP.</text>
</comment>
<comment type="catalytic activity">
    <reaction evidence="1">
        <text>XMP + L-glutamine + ATP + H2O = GMP + L-glutamate + AMP + diphosphate + 2 H(+)</text>
        <dbReference type="Rhea" id="RHEA:11680"/>
        <dbReference type="ChEBI" id="CHEBI:15377"/>
        <dbReference type="ChEBI" id="CHEBI:15378"/>
        <dbReference type="ChEBI" id="CHEBI:29985"/>
        <dbReference type="ChEBI" id="CHEBI:30616"/>
        <dbReference type="ChEBI" id="CHEBI:33019"/>
        <dbReference type="ChEBI" id="CHEBI:57464"/>
        <dbReference type="ChEBI" id="CHEBI:58115"/>
        <dbReference type="ChEBI" id="CHEBI:58359"/>
        <dbReference type="ChEBI" id="CHEBI:456215"/>
        <dbReference type="EC" id="6.3.5.2"/>
    </reaction>
</comment>
<comment type="pathway">
    <text evidence="1">Purine metabolism; GMP biosynthesis; GMP from XMP (L-Gln route): step 1/1.</text>
</comment>
<comment type="subunit">
    <text evidence="1">Homodimer.</text>
</comment>
<feature type="chain" id="PRO_1000120290" description="GMP synthase [glutamine-hydrolyzing]">
    <location>
        <begin position="1"/>
        <end position="525"/>
    </location>
</feature>
<feature type="domain" description="Glutamine amidotransferase type-1" evidence="1">
    <location>
        <begin position="9"/>
        <end position="207"/>
    </location>
</feature>
<feature type="domain" description="GMPS ATP-PPase" evidence="1">
    <location>
        <begin position="208"/>
        <end position="400"/>
    </location>
</feature>
<feature type="active site" description="Nucleophile" evidence="1">
    <location>
        <position position="86"/>
    </location>
</feature>
<feature type="active site" evidence="1">
    <location>
        <position position="181"/>
    </location>
</feature>
<feature type="active site" evidence="1">
    <location>
        <position position="183"/>
    </location>
</feature>
<feature type="binding site" evidence="1">
    <location>
        <begin position="235"/>
        <end position="241"/>
    </location>
    <ligand>
        <name>ATP</name>
        <dbReference type="ChEBI" id="CHEBI:30616"/>
    </ligand>
</feature>
<evidence type="ECO:0000255" key="1">
    <source>
        <dbReference type="HAMAP-Rule" id="MF_00344"/>
    </source>
</evidence>
<dbReference type="EC" id="6.3.5.2" evidence="1"/>
<dbReference type="EMBL" id="CP000970">
    <property type="protein sequence ID" value="ACB19377.1"/>
    <property type="molecule type" value="Genomic_DNA"/>
</dbReference>
<dbReference type="RefSeq" id="WP_000138282.1">
    <property type="nucleotide sequence ID" value="NC_010498.1"/>
</dbReference>
<dbReference type="SMR" id="B1LNF9"/>
<dbReference type="MEROPS" id="C26.957"/>
<dbReference type="GeneID" id="75172615"/>
<dbReference type="KEGG" id="ecm:EcSMS35_2656"/>
<dbReference type="HOGENOM" id="CLU_014340_0_5_6"/>
<dbReference type="UniPathway" id="UPA00189">
    <property type="reaction ID" value="UER00296"/>
</dbReference>
<dbReference type="Proteomes" id="UP000007011">
    <property type="component" value="Chromosome"/>
</dbReference>
<dbReference type="GO" id="GO:0005829">
    <property type="term" value="C:cytosol"/>
    <property type="evidence" value="ECO:0007669"/>
    <property type="project" value="TreeGrafter"/>
</dbReference>
<dbReference type="GO" id="GO:0005524">
    <property type="term" value="F:ATP binding"/>
    <property type="evidence" value="ECO:0007669"/>
    <property type="project" value="UniProtKB-UniRule"/>
</dbReference>
<dbReference type="GO" id="GO:0003921">
    <property type="term" value="F:GMP synthase activity"/>
    <property type="evidence" value="ECO:0007669"/>
    <property type="project" value="InterPro"/>
</dbReference>
<dbReference type="CDD" id="cd01742">
    <property type="entry name" value="GATase1_GMP_Synthase"/>
    <property type="match status" value="1"/>
</dbReference>
<dbReference type="CDD" id="cd01997">
    <property type="entry name" value="GMP_synthase_C"/>
    <property type="match status" value="1"/>
</dbReference>
<dbReference type="FunFam" id="3.30.300.10:FF:000002">
    <property type="entry name" value="GMP synthase [glutamine-hydrolyzing]"/>
    <property type="match status" value="1"/>
</dbReference>
<dbReference type="FunFam" id="3.40.50.620:FF:000001">
    <property type="entry name" value="GMP synthase [glutamine-hydrolyzing]"/>
    <property type="match status" value="1"/>
</dbReference>
<dbReference type="FunFam" id="3.40.50.880:FF:000001">
    <property type="entry name" value="GMP synthase [glutamine-hydrolyzing]"/>
    <property type="match status" value="1"/>
</dbReference>
<dbReference type="Gene3D" id="3.30.300.10">
    <property type="match status" value="1"/>
</dbReference>
<dbReference type="Gene3D" id="3.40.50.880">
    <property type="match status" value="1"/>
</dbReference>
<dbReference type="Gene3D" id="3.40.50.620">
    <property type="entry name" value="HUPs"/>
    <property type="match status" value="1"/>
</dbReference>
<dbReference type="HAMAP" id="MF_00344">
    <property type="entry name" value="GMP_synthase"/>
    <property type="match status" value="1"/>
</dbReference>
<dbReference type="InterPro" id="IPR029062">
    <property type="entry name" value="Class_I_gatase-like"/>
</dbReference>
<dbReference type="InterPro" id="IPR017926">
    <property type="entry name" value="GATASE"/>
</dbReference>
<dbReference type="InterPro" id="IPR001674">
    <property type="entry name" value="GMP_synth_C"/>
</dbReference>
<dbReference type="InterPro" id="IPR004739">
    <property type="entry name" value="GMP_synth_GATase"/>
</dbReference>
<dbReference type="InterPro" id="IPR022955">
    <property type="entry name" value="GMP_synthase"/>
</dbReference>
<dbReference type="InterPro" id="IPR025777">
    <property type="entry name" value="GMPS_ATP_PPase_dom"/>
</dbReference>
<dbReference type="InterPro" id="IPR022310">
    <property type="entry name" value="NAD/GMP_synthase"/>
</dbReference>
<dbReference type="InterPro" id="IPR014729">
    <property type="entry name" value="Rossmann-like_a/b/a_fold"/>
</dbReference>
<dbReference type="NCBIfam" id="TIGR00884">
    <property type="entry name" value="guaA_Cterm"/>
    <property type="match status" value="1"/>
</dbReference>
<dbReference type="NCBIfam" id="TIGR00888">
    <property type="entry name" value="guaA_Nterm"/>
    <property type="match status" value="1"/>
</dbReference>
<dbReference type="NCBIfam" id="NF000848">
    <property type="entry name" value="PRK00074.1"/>
    <property type="match status" value="1"/>
</dbReference>
<dbReference type="PANTHER" id="PTHR11922:SF2">
    <property type="entry name" value="GMP SYNTHASE [GLUTAMINE-HYDROLYZING]"/>
    <property type="match status" value="1"/>
</dbReference>
<dbReference type="PANTHER" id="PTHR11922">
    <property type="entry name" value="GMP SYNTHASE-RELATED"/>
    <property type="match status" value="1"/>
</dbReference>
<dbReference type="Pfam" id="PF00117">
    <property type="entry name" value="GATase"/>
    <property type="match status" value="1"/>
</dbReference>
<dbReference type="Pfam" id="PF00958">
    <property type="entry name" value="GMP_synt_C"/>
    <property type="match status" value="1"/>
</dbReference>
<dbReference type="Pfam" id="PF02540">
    <property type="entry name" value="NAD_synthase"/>
    <property type="match status" value="1"/>
</dbReference>
<dbReference type="PRINTS" id="PR00097">
    <property type="entry name" value="ANTSNTHASEII"/>
</dbReference>
<dbReference type="PRINTS" id="PR00099">
    <property type="entry name" value="CPSGATASE"/>
</dbReference>
<dbReference type="PRINTS" id="PR00096">
    <property type="entry name" value="GATASE"/>
</dbReference>
<dbReference type="SUPFAM" id="SSF52402">
    <property type="entry name" value="Adenine nucleotide alpha hydrolases-like"/>
    <property type="match status" value="1"/>
</dbReference>
<dbReference type="SUPFAM" id="SSF52317">
    <property type="entry name" value="Class I glutamine amidotransferase-like"/>
    <property type="match status" value="1"/>
</dbReference>
<dbReference type="SUPFAM" id="SSF54810">
    <property type="entry name" value="GMP synthetase C-terminal dimerisation domain"/>
    <property type="match status" value="1"/>
</dbReference>
<dbReference type="PROSITE" id="PS51273">
    <property type="entry name" value="GATASE_TYPE_1"/>
    <property type="match status" value="1"/>
</dbReference>
<dbReference type="PROSITE" id="PS51553">
    <property type="entry name" value="GMPS_ATP_PPASE"/>
    <property type="match status" value="1"/>
</dbReference>
<accession>B1LNF9</accession>
<keyword id="KW-0067">ATP-binding</keyword>
<keyword id="KW-0315">Glutamine amidotransferase</keyword>
<keyword id="KW-0332">GMP biosynthesis</keyword>
<keyword id="KW-0436">Ligase</keyword>
<keyword id="KW-0547">Nucleotide-binding</keyword>
<keyword id="KW-0658">Purine biosynthesis</keyword>
<reference key="1">
    <citation type="journal article" date="2008" name="J. Bacteriol.">
        <title>Insights into the environmental resistance gene pool from the genome sequence of the multidrug-resistant environmental isolate Escherichia coli SMS-3-5.</title>
        <authorList>
            <person name="Fricke W.F."/>
            <person name="Wright M.S."/>
            <person name="Lindell A.H."/>
            <person name="Harkins D.M."/>
            <person name="Baker-Austin C."/>
            <person name="Ravel J."/>
            <person name="Stepanauskas R."/>
        </authorList>
    </citation>
    <scope>NUCLEOTIDE SEQUENCE [LARGE SCALE GENOMIC DNA]</scope>
    <source>
        <strain>SMS-3-5 / SECEC</strain>
    </source>
</reference>